<sequence length="88" mass="9970">MLKLICIVFLVTVLTFVVGEDTLDPAEYGCPSDVDMAELTEKNEVCLRCEDFHKEGVAFTLCKTNCFTTEYYKNCVKDLEEAGKETEE</sequence>
<evidence type="ECO:0000250" key="1">
    <source>
        <dbReference type="UniProtKB" id="P55847"/>
    </source>
</evidence>
<evidence type="ECO:0000250" key="2">
    <source>
        <dbReference type="UniProtKB" id="Q4U4N3"/>
    </source>
</evidence>
<evidence type="ECO:0000250" key="3">
    <source>
        <dbReference type="UniProtKB" id="V9QEI7"/>
    </source>
</evidence>
<evidence type="ECO:0000255" key="4"/>
<evidence type="ECO:0000303" key="5">
    <source>
    </source>
</evidence>
<evidence type="ECO:0000305" key="6"/>
<evidence type="ECO:0000305" key="7">
    <source>
    </source>
</evidence>
<feature type="signal peptide" evidence="4">
    <location>
        <begin position="1"/>
        <end position="19"/>
    </location>
</feature>
<feature type="chain" id="PRO_0000432881" description="Alpha-latrotoxin associated low molecular weight protein 2" evidence="3">
    <location>
        <begin position="20"/>
        <end position="88"/>
    </location>
</feature>
<feature type="disulfide bond" evidence="1">
    <location>
        <begin position="30"/>
        <end position="66"/>
    </location>
</feature>
<feature type="disulfide bond" evidence="1">
    <location>
        <begin position="46"/>
        <end position="62"/>
    </location>
</feature>
<feature type="disulfide bond" evidence="1">
    <location>
        <begin position="49"/>
        <end position="75"/>
    </location>
</feature>
<feature type="sequence conflict" description="In Ref. 1; AHC13270." evidence="6" ref="1">
    <original>E</original>
    <variation>Q</variation>
    <location>
        <position position="70"/>
    </location>
</feature>
<dbReference type="EMBL" id="KF751515">
    <property type="protein sequence ID" value="AHC13260.1"/>
    <property type="molecule type" value="mRNA"/>
</dbReference>
<dbReference type="EMBL" id="KF751525">
    <property type="protein sequence ID" value="AHC13270.1"/>
    <property type="molecule type" value="Genomic_DNA"/>
</dbReference>
<dbReference type="SMR" id="V9QFG7"/>
<dbReference type="GO" id="GO:0005576">
    <property type="term" value="C:extracellular region"/>
    <property type="evidence" value="ECO:0007669"/>
    <property type="project" value="UniProtKB-SubCell"/>
</dbReference>
<dbReference type="Gene3D" id="1.10.2010.10">
    <property type="entry name" value="Crustacean CHH/MIH/GIH neurohormone"/>
    <property type="match status" value="1"/>
</dbReference>
<dbReference type="InterPro" id="IPR031098">
    <property type="entry name" value="Crust_neurohorm"/>
</dbReference>
<dbReference type="InterPro" id="IPR035957">
    <property type="entry name" value="Crust_neurohorm_sf"/>
</dbReference>
<dbReference type="Pfam" id="PF01147">
    <property type="entry name" value="Crust_neurohorm"/>
    <property type="match status" value="1"/>
</dbReference>
<dbReference type="SUPFAM" id="SSF81778">
    <property type="entry name" value="Crustacean CHH/MIH/GIH neurohormone"/>
    <property type="match status" value="1"/>
</dbReference>
<accession>V9QFG7</accession>
<accession>V9QFH1</accession>
<organism>
    <name type="scientific">Latrodectus geometricus</name>
    <name type="common">Brown widow spider</name>
    <dbReference type="NCBI Taxonomy" id="156851"/>
    <lineage>
        <taxon>Eukaryota</taxon>
        <taxon>Metazoa</taxon>
        <taxon>Ecdysozoa</taxon>
        <taxon>Arthropoda</taxon>
        <taxon>Chelicerata</taxon>
        <taxon>Arachnida</taxon>
        <taxon>Araneae</taxon>
        <taxon>Araneomorphae</taxon>
        <taxon>Entelegynae</taxon>
        <taxon>Araneoidea</taxon>
        <taxon>Theridiidae</taxon>
        <taxon>Latrodectus</taxon>
    </lineage>
</organism>
<reference key="1">
    <citation type="journal article" date="2014" name="Gene">
        <title>Recruitment and diversification of an ecdysozoan family of neuropeptide hormones for black widow spider venom expression.</title>
        <authorList>
            <person name="McCowan C."/>
            <person name="Garb J.E."/>
        </authorList>
    </citation>
    <scope>NUCLEOTIDE SEQUENCE [GENOMIC DNA / MRNA]</scope>
    <source>
        <tissue>Venom gland</tissue>
    </source>
</reference>
<comment type="function">
    <text evidence="2">May increase the toxicity of alpha-latrotoxin and/or other venom components. Is non-toxic to mice and to the cockroach Periplaneta americana.</text>
</comment>
<comment type="subcellular location">
    <subcellularLocation>
        <location evidence="2">Secreted</location>
    </subcellularLocation>
</comment>
<comment type="tissue specificity">
    <text evidence="7">Expressed by the venom gland.</text>
</comment>
<comment type="miscellaneous">
    <text evidence="2">Co-purifies with latroinsectotoxin.</text>
</comment>
<comment type="similarity">
    <text evidence="7">Belongs to the arthropod CHH/MIH/GIH/VIH hormone family.</text>
</comment>
<proteinExistence type="inferred from homology"/>
<keyword id="KW-1015">Disulfide bond</keyword>
<keyword id="KW-0964">Secreted</keyword>
<keyword id="KW-0732">Signal</keyword>
<name>TXA2_LATGE</name>
<protein>
    <recommendedName>
        <fullName evidence="5">Alpha-latrotoxin associated low molecular weight protein 2</fullName>
        <shortName evidence="5">Alpha-latrotoxin-associated LMWP2</shortName>
    </recommendedName>
    <alternativeName>
        <fullName evidence="5">Latrodectin-2</fullName>
    </alternativeName>
</protein>